<accession>C5BHA8</accession>
<feature type="chain" id="PRO_1000213554" description="Protein Syd">
    <location>
        <begin position="1"/>
        <end position="184"/>
    </location>
</feature>
<name>SYDP_EDWI9</name>
<gene>
    <name evidence="1" type="primary">syd</name>
    <name type="ordered locus">NT01EI_0827</name>
</gene>
<reference key="1">
    <citation type="submission" date="2009-03" db="EMBL/GenBank/DDBJ databases">
        <title>Complete genome sequence of Edwardsiella ictaluri 93-146.</title>
        <authorList>
            <person name="Williams M.L."/>
            <person name="Gillaspy A.F."/>
            <person name="Dyer D.W."/>
            <person name="Thune R.L."/>
            <person name="Waldbieser G.C."/>
            <person name="Schuster S.C."/>
            <person name="Gipson J."/>
            <person name="Zaitshik J."/>
            <person name="Landry C."/>
            <person name="Lawrence M.L."/>
        </authorList>
    </citation>
    <scope>NUCLEOTIDE SEQUENCE [LARGE SCALE GENOMIC DNA]</scope>
    <source>
        <strain>93-146</strain>
    </source>
</reference>
<sequence>MEHQVSAALREFTQRYVAQWQQQHGDWPSSHALYGIPSPCVVYSRDDCVFWRPEPGRGEDLEGIGRALDIRLHPALAPFFTTQYAGDMRARWNEIEMDLVQVWSVEDLHRLQENQIGHLVTQRRLKLSPTLFLASTADELSMVTLCNLSGSVLLEQFGSPQRRVLAQTLTEFLAELQPLAQEVG</sequence>
<dbReference type="EMBL" id="CP001600">
    <property type="protein sequence ID" value="ACR68044.1"/>
    <property type="molecule type" value="Genomic_DNA"/>
</dbReference>
<dbReference type="RefSeq" id="WP_015870237.1">
    <property type="nucleotide sequence ID" value="NZ_CP169062.1"/>
</dbReference>
<dbReference type="SMR" id="C5BHA8"/>
<dbReference type="STRING" id="67780.B6E78_14735"/>
<dbReference type="GeneID" id="69537884"/>
<dbReference type="KEGG" id="eic:NT01EI_0827"/>
<dbReference type="PATRIC" id="fig|634503.3.peg.747"/>
<dbReference type="HOGENOM" id="CLU_121866_0_0_6"/>
<dbReference type="OrthoDB" id="5599437at2"/>
<dbReference type="Proteomes" id="UP000001485">
    <property type="component" value="Chromosome"/>
</dbReference>
<dbReference type="GO" id="GO:0009898">
    <property type="term" value="C:cytoplasmic side of plasma membrane"/>
    <property type="evidence" value="ECO:0007669"/>
    <property type="project" value="InterPro"/>
</dbReference>
<dbReference type="CDD" id="cd16323">
    <property type="entry name" value="Syd"/>
    <property type="match status" value="1"/>
</dbReference>
<dbReference type="Gene3D" id="3.40.1580.20">
    <property type="entry name" value="Syd protein"/>
    <property type="match status" value="1"/>
</dbReference>
<dbReference type="HAMAP" id="MF_01104">
    <property type="entry name" value="Syd"/>
    <property type="match status" value="1"/>
</dbReference>
<dbReference type="InterPro" id="IPR009948">
    <property type="entry name" value="Syd"/>
</dbReference>
<dbReference type="InterPro" id="IPR038228">
    <property type="entry name" value="Syd_sf"/>
</dbReference>
<dbReference type="NCBIfam" id="NF003439">
    <property type="entry name" value="PRK04968.1"/>
    <property type="match status" value="1"/>
</dbReference>
<dbReference type="Pfam" id="PF07348">
    <property type="entry name" value="Syd"/>
    <property type="match status" value="1"/>
</dbReference>
<evidence type="ECO:0000255" key="1">
    <source>
        <dbReference type="HAMAP-Rule" id="MF_01104"/>
    </source>
</evidence>
<protein>
    <recommendedName>
        <fullName evidence="1">Protein Syd</fullName>
    </recommendedName>
</protein>
<keyword id="KW-0997">Cell inner membrane</keyword>
<keyword id="KW-1003">Cell membrane</keyword>
<keyword id="KW-0472">Membrane</keyword>
<organism>
    <name type="scientific">Edwardsiella ictaluri (strain 93-146)</name>
    <dbReference type="NCBI Taxonomy" id="634503"/>
    <lineage>
        <taxon>Bacteria</taxon>
        <taxon>Pseudomonadati</taxon>
        <taxon>Pseudomonadota</taxon>
        <taxon>Gammaproteobacteria</taxon>
        <taxon>Enterobacterales</taxon>
        <taxon>Hafniaceae</taxon>
        <taxon>Edwardsiella</taxon>
    </lineage>
</organism>
<proteinExistence type="inferred from homology"/>
<comment type="function">
    <text evidence="1">Interacts with the SecY protein in vivo. May bind preferentially to an uncomplexed state of SecY, thus functioning either as a chelating agent for excess SecY in the cell or as a regulatory factor that negatively controls the translocase function.</text>
</comment>
<comment type="subcellular location">
    <subcellularLocation>
        <location evidence="1">Cell inner membrane</location>
        <topology evidence="1">Peripheral membrane protein</topology>
        <orientation evidence="1">Cytoplasmic side</orientation>
    </subcellularLocation>
    <text evidence="1">Loosely associated with the cytoplasmic side of the inner membrane, probably via SecY.</text>
</comment>
<comment type="similarity">
    <text evidence="1">Belongs to the Syd family.</text>
</comment>